<sequence length="310" mass="33396">MSKASMLFSITVPGSTANLGPGFDSVGMALSRYLKLSVFDHDSWLFEAESDVVSGIPPGTDNLIYQTAKKVADHFGKTLPPVYVKVWSDIPLARGLGSSAAAIVAAIELANQLLELNMTDDQKLFFASEVEGHPDNAGASLFGGLLIGLHEEDKTHAVKVKHVDIDVVVVIPFYEVLTKDARDVLPEDFSYKHAVSASAVSNVLVAALMTQNWPLVGEMMNKDLFHQPYRTMLVPELSKVEHVASLKGAYGTALSGAGPTILTLIEKGKGEGLKKQLAQNFPHCEVDLLTVPVEGVVVEHDPVNQVKNVL</sequence>
<feature type="chain" id="PRO_1000060698" description="Homoserine kinase">
    <location>
        <begin position="1"/>
        <end position="310"/>
    </location>
</feature>
<feature type="binding site" evidence="1">
    <location>
        <begin position="91"/>
        <end position="101"/>
    </location>
    <ligand>
        <name>ATP</name>
        <dbReference type="ChEBI" id="CHEBI:30616"/>
    </ligand>
</feature>
<name>KHSE_BACP2</name>
<accession>A8FH24</accession>
<gene>
    <name evidence="1" type="primary">thrB</name>
    <name type="ordered locus">BPUM_2886</name>
</gene>
<evidence type="ECO:0000255" key="1">
    <source>
        <dbReference type="HAMAP-Rule" id="MF_00384"/>
    </source>
</evidence>
<organism>
    <name type="scientific">Bacillus pumilus (strain SAFR-032)</name>
    <dbReference type="NCBI Taxonomy" id="315750"/>
    <lineage>
        <taxon>Bacteria</taxon>
        <taxon>Bacillati</taxon>
        <taxon>Bacillota</taxon>
        <taxon>Bacilli</taxon>
        <taxon>Bacillales</taxon>
        <taxon>Bacillaceae</taxon>
        <taxon>Bacillus</taxon>
    </lineage>
</organism>
<keyword id="KW-0028">Amino-acid biosynthesis</keyword>
<keyword id="KW-0067">ATP-binding</keyword>
<keyword id="KW-0963">Cytoplasm</keyword>
<keyword id="KW-0418">Kinase</keyword>
<keyword id="KW-0547">Nucleotide-binding</keyword>
<keyword id="KW-0791">Threonine biosynthesis</keyword>
<keyword id="KW-0808">Transferase</keyword>
<reference key="1">
    <citation type="journal article" date="2007" name="PLoS ONE">
        <title>Paradoxical DNA repair and peroxide resistance gene conservation in Bacillus pumilus SAFR-032.</title>
        <authorList>
            <person name="Gioia J."/>
            <person name="Yerrapragada S."/>
            <person name="Qin X."/>
            <person name="Jiang H."/>
            <person name="Igboeli O.C."/>
            <person name="Muzny D."/>
            <person name="Dugan-Rocha S."/>
            <person name="Ding Y."/>
            <person name="Hawes A."/>
            <person name="Liu W."/>
            <person name="Perez L."/>
            <person name="Kovar C."/>
            <person name="Dinh H."/>
            <person name="Lee S."/>
            <person name="Nazareth L."/>
            <person name="Blyth P."/>
            <person name="Holder M."/>
            <person name="Buhay C."/>
            <person name="Tirumalai M.R."/>
            <person name="Liu Y."/>
            <person name="Dasgupta I."/>
            <person name="Bokhetache L."/>
            <person name="Fujita M."/>
            <person name="Karouia F."/>
            <person name="Eswara Moorthy P."/>
            <person name="Siefert J."/>
            <person name="Uzman A."/>
            <person name="Buzumbo P."/>
            <person name="Verma A."/>
            <person name="Zwiya H."/>
            <person name="McWilliams B.D."/>
            <person name="Olowu A."/>
            <person name="Clinkenbeard K.D."/>
            <person name="Newcombe D."/>
            <person name="Golebiewski L."/>
            <person name="Petrosino J.F."/>
            <person name="Nicholson W.L."/>
            <person name="Fox G.E."/>
            <person name="Venkateswaran K."/>
            <person name="Highlander S.K."/>
            <person name="Weinstock G.M."/>
        </authorList>
    </citation>
    <scope>NUCLEOTIDE SEQUENCE [LARGE SCALE GENOMIC DNA]</scope>
    <source>
        <strain>SAFR-032</strain>
    </source>
</reference>
<protein>
    <recommendedName>
        <fullName evidence="1">Homoserine kinase</fullName>
        <shortName evidence="1">HK</shortName>
        <shortName evidence="1">HSK</shortName>
        <ecNumber evidence="1">2.7.1.39</ecNumber>
    </recommendedName>
</protein>
<comment type="function">
    <text evidence="1">Catalyzes the ATP-dependent phosphorylation of L-homoserine to L-homoserine phosphate.</text>
</comment>
<comment type="catalytic activity">
    <reaction evidence="1">
        <text>L-homoserine + ATP = O-phospho-L-homoserine + ADP + H(+)</text>
        <dbReference type="Rhea" id="RHEA:13985"/>
        <dbReference type="ChEBI" id="CHEBI:15378"/>
        <dbReference type="ChEBI" id="CHEBI:30616"/>
        <dbReference type="ChEBI" id="CHEBI:57476"/>
        <dbReference type="ChEBI" id="CHEBI:57590"/>
        <dbReference type="ChEBI" id="CHEBI:456216"/>
        <dbReference type="EC" id="2.7.1.39"/>
    </reaction>
</comment>
<comment type="pathway">
    <text evidence="1">Amino-acid biosynthesis; L-threonine biosynthesis; L-threonine from L-aspartate: step 4/5.</text>
</comment>
<comment type="subcellular location">
    <subcellularLocation>
        <location evidence="1">Cytoplasm</location>
    </subcellularLocation>
</comment>
<comment type="similarity">
    <text evidence="1">Belongs to the GHMP kinase family. Homoserine kinase subfamily.</text>
</comment>
<proteinExistence type="inferred from homology"/>
<dbReference type="EC" id="2.7.1.39" evidence="1"/>
<dbReference type="EMBL" id="CP000813">
    <property type="protein sequence ID" value="ABV63541.1"/>
    <property type="molecule type" value="Genomic_DNA"/>
</dbReference>
<dbReference type="RefSeq" id="WP_012011146.1">
    <property type="nucleotide sequence ID" value="NC_009848.4"/>
</dbReference>
<dbReference type="SMR" id="A8FH24"/>
<dbReference type="STRING" id="315750.BPUM_2886"/>
<dbReference type="GeneID" id="5622175"/>
<dbReference type="KEGG" id="bpu:BPUM_2886"/>
<dbReference type="eggNOG" id="COG0083">
    <property type="taxonomic scope" value="Bacteria"/>
</dbReference>
<dbReference type="HOGENOM" id="CLU_041243_0_0_9"/>
<dbReference type="OrthoDB" id="9769912at2"/>
<dbReference type="UniPathway" id="UPA00050">
    <property type="reaction ID" value="UER00064"/>
</dbReference>
<dbReference type="Proteomes" id="UP000001355">
    <property type="component" value="Chromosome"/>
</dbReference>
<dbReference type="GO" id="GO:0005737">
    <property type="term" value="C:cytoplasm"/>
    <property type="evidence" value="ECO:0007669"/>
    <property type="project" value="UniProtKB-SubCell"/>
</dbReference>
<dbReference type="GO" id="GO:0005524">
    <property type="term" value="F:ATP binding"/>
    <property type="evidence" value="ECO:0007669"/>
    <property type="project" value="UniProtKB-UniRule"/>
</dbReference>
<dbReference type="GO" id="GO:0004413">
    <property type="term" value="F:homoserine kinase activity"/>
    <property type="evidence" value="ECO:0007669"/>
    <property type="project" value="UniProtKB-UniRule"/>
</dbReference>
<dbReference type="GO" id="GO:0009088">
    <property type="term" value="P:threonine biosynthetic process"/>
    <property type="evidence" value="ECO:0007669"/>
    <property type="project" value="UniProtKB-UniRule"/>
</dbReference>
<dbReference type="Gene3D" id="3.30.230.10">
    <property type="match status" value="1"/>
</dbReference>
<dbReference type="Gene3D" id="3.30.70.890">
    <property type="entry name" value="GHMP kinase, C-terminal domain"/>
    <property type="match status" value="1"/>
</dbReference>
<dbReference type="HAMAP" id="MF_00384">
    <property type="entry name" value="Homoser_kinase"/>
    <property type="match status" value="1"/>
</dbReference>
<dbReference type="InterPro" id="IPR013750">
    <property type="entry name" value="GHMP_kinase_C_dom"/>
</dbReference>
<dbReference type="InterPro" id="IPR036554">
    <property type="entry name" value="GHMP_kinase_C_sf"/>
</dbReference>
<dbReference type="InterPro" id="IPR006204">
    <property type="entry name" value="GHMP_kinase_N_dom"/>
</dbReference>
<dbReference type="InterPro" id="IPR006203">
    <property type="entry name" value="GHMP_knse_ATP-bd_CS"/>
</dbReference>
<dbReference type="InterPro" id="IPR000870">
    <property type="entry name" value="Homoserine_kinase"/>
</dbReference>
<dbReference type="InterPro" id="IPR020568">
    <property type="entry name" value="Ribosomal_Su5_D2-typ_SF"/>
</dbReference>
<dbReference type="InterPro" id="IPR014721">
    <property type="entry name" value="Ribsml_uS5_D2-typ_fold_subgr"/>
</dbReference>
<dbReference type="NCBIfam" id="TIGR00191">
    <property type="entry name" value="thrB"/>
    <property type="match status" value="1"/>
</dbReference>
<dbReference type="PANTHER" id="PTHR20861:SF1">
    <property type="entry name" value="HOMOSERINE KINASE"/>
    <property type="match status" value="1"/>
</dbReference>
<dbReference type="PANTHER" id="PTHR20861">
    <property type="entry name" value="HOMOSERINE/4-DIPHOSPHOCYTIDYL-2-C-METHYL-D-ERYTHRITOL KINASE"/>
    <property type="match status" value="1"/>
</dbReference>
<dbReference type="Pfam" id="PF08544">
    <property type="entry name" value="GHMP_kinases_C"/>
    <property type="match status" value="1"/>
</dbReference>
<dbReference type="Pfam" id="PF00288">
    <property type="entry name" value="GHMP_kinases_N"/>
    <property type="match status" value="1"/>
</dbReference>
<dbReference type="PIRSF" id="PIRSF000676">
    <property type="entry name" value="Homoser_kin"/>
    <property type="match status" value="1"/>
</dbReference>
<dbReference type="PRINTS" id="PR00958">
    <property type="entry name" value="HOMSERKINASE"/>
</dbReference>
<dbReference type="SUPFAM" id="SSF55060">
    <property type="entry name" value="GHMP Kinase, C-terminal domain"/>
    <property type="match status" value="1"/>
</dbReference>
<dbReference type="SUPFAM" id="SSF54211">
    <property type="entry name" value="Ribosomal protein S5 domain 2-like"/>
    <property type="match status" value="1"/>
</dbReference>
<dbReference type="PROSITE" id="PS00627">
    <property type="entry name" value="GHMP_KINASES_ATP"/>
    <property type="match status" value="1"/>
</dbReference>